<feature type="chain" id="PRO_0000391153" description="NADH-quinone oxidoreductase subunit N">
    <location>
        <begin position="1"/>
        <end position="466"/>
    </location>
</feature>
<feature type="transmembrane region" description="Helical" evidence="1">
    <location>
        <begin position="9"/>
        <end position="29"/>
    </location>
</feature>
<feature type="transmembrane region" description="Helical" evidence="1">
    <location>
        <begin position="33"/>
        <end position="53"/>
    </location>
</feature>
<feature type="transmembrane region" description="Helical" evidence="1">
    <location>
        <begin position="68"/>
        <end position="88"/>
    </location>
</feature>
<feature type="transmembrane region" description="Helical" evidence="1">
    <location>
        <begin position="100"/>
        <end position="120"/>
    </location>
</feature>
<feature type="transmembrane region" description="Helical" evidence="1">
    <location>
        <begin position="122"/>
        <end position="142"/>
    </location>
</feature>
<feature type="transmembrane region" description="Helical" evidence="1">
    <location>
        <begin position="157"/>
        <end position="177"/>
    </location>
</feature>
<feature type="transmembrane region" description="Helical" evidence="1">
    <location>
        <begin position="190"/>
        <end position="210"/>
    </location>
</feature>
<feature type="transmembrane region" description="Helical" evidence="1">
    <location>
        <begin position="232"/>
        <end position="252"/>
    </location>
</feature>
<feature type="transmembrane region" description="Helical" evidence="1">
    <location>
        <begin position="263"/>
        <end position="283"/>
    </location>
</feature>
<feature type="transmembrane region" description="Helical" evidence="1">
    <location>
        <begin position="289"/>
        <end position="309"/>
    </location>
</feature>
<feature type="transmembrane region" description="Helical" evidence="1">
    <location>
        <begin position="314"/>
        <end position="334"/>
    </location>
</feature>
<feature type="transmembrane region" description="Helical" evidence="1">
    <location>
        <begin position="359"/>
        <end position="379"/>
    </location>
</feature>
<feature type="transmembrane region" description="Helical" evidence="1">
    <location>
        <begin position="394"/>
        <end position="416"/>
    </location>
</feature>
<feature type="transmembrane region" description="Helical" evidence="1">
    <location>
        <begin position="438"/>
        <end position="458"/>
    </location>
</feature>
<name>NUON_GEOMG</name>
<gene>
    <name evidence="1" type="primary">nuoN</name>
    <name type="ordered locus">Gmet_0172</name>
</gene>
<evidence type="ECO:0000255" key="1">
    <source>
        <dbReference type="HAMAP-Rule" id="MF_00445"/>
    </source>
</evidence>
<comment type="function">
    <text evidence="1">NDH-1 shuttles electrons from NADH, via FMN and iron-sulfur (Fe-S) centers, to quinones in the respiratory chain. The immediate electron acceptor for the enzyme in this species is believed to be ubiquinone. Couples the redox reaction to proton translocation (for every two electrons transferred, four hydrogen ions are translocated across the cytoplasmic membrane), and thus conserves the redox energy in a proton gradient.</text>
</comment>
<comment type="catalytic activity">
    <reaction evidence="1">
        <text>a quinone + NADH + 5 H(+)(in) = a quinol + NAD(+) + 4 H(+)(out)</text>
        <dbReference type="Rhea" id="RHEA:57888"/>
        <dbReference type="ChEBI" id="CHEBI:15378"/>
        <dbReference type="ChEBI" id="CHEBI:24646"/>
        <dbReference type="ChEBI" id="CHEBI:57540"/>
        <dbReference type="ChEBI" id="CHEBI:57945"/>
        <dbReference type="ChEBI" id="CHEBI:132124"/>
    </reaction>
</comment>
<comment type="subunit">
    <text evidence="1">NDH-1 is composed of 14 different subunits. Subunits NuoA, H, J, K, L, M, N constitute the membrane sector of the complex.</text>
</comment>
<comment type="subcellular location">
    <subcellularLocation>
        <location evidence="1">Cell inner membrane</location>
        <topology evidence="1">Multi-pass membrane protein</topology>
    </subcellularLocation>
</comment>
<comment type="similarity">
    <text evidence="1">Belongs to the complex I subunit 2 family.</text>
</comment>
<proteinExistence type="inferred from homology"/>
<protein>
    <recommendedName>
        <fullName evidence="1">NADH-quinone oxidoreductase subunit N</fullName>
        <ecNumber evidence="1">7.1.1.-</ecNumber>
    </recommendedName>
    <alternativeName>
        <fullName evidence="1">NADH dehydrogenase I subunit N</fullName>
    </alternativeName>
    <alternativeName>
        <fullName evidence="1">NDH-1 subunit N</fullName>
    </alternativeName>
</protein>
<sequence length="466" mass="47872">MTITELWALIPLLILACGSVFVLMLGAIVPGRCGTVIGVAVCAGTALWAMLAPPQPLAPPTLGVTVTPFTRFFLVFFAVTAGLSLLLARDHAARQGLKGEEYPATILFGTFGMGVVASAANFLTLFLGLEALTFAFYILVAYDHNRPASGEAGLKYLLMGAVSAAFVAFGIALLYGATGTLEISRAVAASAAGGGIALAGWGLLLAGLAFKISLAPAHLWTPDIYQGGPTPVVAFLASGSKGAAIALFLLILSPLGTLGTLRAPLWGLAFLSMTVGNLAALLQPNVKRMLAYSSVAQMGYVALALLSGGRGYEAAAFYAVAYGAMVLAAFGALASLEGETPLEQVDDLRGLGYHRPFQGVVLAVAMLALAGIPPTVGFVGKFAIFFAALKGGEAPLAVIGILTAAASAYYYLRVVVNLYMKPADETGSGQRPTVAEALSLGIAALAIFILGIWPGPLFDLAAAILR</sequence>
<keyword id="KW-0997">Cell inner membrane</keyword>
<keyword id="KW-1003">Cell membrane</keyword>
<keyword id="KW-0472">Membrane</keyword>
<keyword id="KW-0520">NAD</keyword>
<keyword id="KW-0874">Quinone</keyword>
<keyword id="KW-1185">Reference proteome</keyword>
<keyword id="KW-1278">Translocase</keyword>
<keyword id="KW-0812">Transmembrane</keyword>
<keyword id="KW-1133">Transmembrane helix</keyword>
<keyword id="KW-0813">Transport</keyword>
<keyword id="KW-0830">Ubiquinone</keyword>
<organism>
    <name type="scientific">Geobacter metallireducens (strain ATCC 53774 / DSM 7210 / GS-15)</name>
    <dbReference type="NCBI Taxonomy" id="269799"/>
    <lineage>
        <taxon>Bacteria</taxon>
        <taxon>Pseudomonadati</taxon>
        <taxon>Thermodesulfobacteriota</taxon>
        <taxon>Desulfuromonadia</taxon>
        <taxon>Geobacterales</taxon>
        <taxon>Geobacteraceae</taxon>
        <taxon>Geobacter</taxon>
    </lineage>
</organism>
<accession>Q39ZA5</accession>
<reference key="1">
    <citation type="journal article" date="2009" name="BMC Microbiol.">
        <title>The genome sequence of Geobacter metallireducens: features of metabolism, physiology and regulation common and dissimilar to Geobacter sulfurreducens.</title>
        <authorList>
            <person name="Aklujkar M."/>
            <person name="Krushkal J."/>
            <person name="DiBartolo G."/>
            <person name="Lapidus A."/>
            <person name="Land M.L."/>
            <person name="Lovley D.R."/>
        </authorList>
    </citation>
    <scope>NUCLEOTIDE SEQUENCE [LARGE SCALE GENOMIC DNA]</scope>
    <source>
        <strain>ATCC 53774 / DSM 7210 / GS-15</strain>
    </source>
</reference>
<dbReference type="EC" id="7.1.1.-" evidence="1"/>
<dbReference type="EMBL" id="CP000148">
    <property type="protein sequence ID" value="ABB30419.1"/>
    <property type="molecule type" value="Genomic_DNA"/>
</dbReference>
<dbReference type="RefSeq" id="WP_004512760.1">
    <property type="nucleotide sequence ID" value="NC_007517.1"/>
</dbReference>
<dbReference type="SMR" id="Q39ZA5"/>
<dbReference type="STRING" id="269799.Gmet_0172"/>
<dbReference type="KEGG" id="gme:Gmet_0172"/>
<dbReference type="eggNOG" id="COG1007">
    <property type="taxonomic scope" value="Bacteria"/>
</dbReference>
<dbReference type="HOGENOM" id="CLU_007100_1_3_7"/>
<dbReference type="Proteomes" id="UP000007073">
    <property type="component" value="Chromosome"/>
</dbReference>
<dbReference type="GO" id="GO:0005886">
    <property type="term" value="C:plasma membrane"/>
    <property type="evidence" value="ECO:0007669"/>
    <property type="project" value="UniProtKB-SubCell"/>
</dbReference>
<dbReference type="GO" id="GO:0008137">
    <property type="term" value="F:NADH dehydrogenase (ubiquinone) activity"/>
    <property type="evidence" value="ECO:0007669"/>
    <property type="project" value="InterPro"/>
</dbReference>
<dbReference type="GO" id="GO:0050136">
    <property type="term" value="F:NADH:ubiquinone reductase (non-electrogenic) activity"/>
    <property type="evidence" value="ECO:0007669"/>
    <property type="project" value="UniProtKB-UniRule"/>
</dbReference>
<dbReference type="GO" id="GO:0048038">
    <property type="term" value="F:quinone binding"/>
    <property type="evidence" value="ECO:0007669"/>
    <property type="project" value="UniProtKB-KW"/>
</dbReference>
<dbReference type="GO" id="GO:0042773">
    <property type="term" value="P:ATP synthesis coupled electron transport"/>
    <property type="evidence" value="ECO:0007669"/>
    <property type="project" value="InterPro"/>
</dbReference>
<dbReference type="HAMAP" id="MF_00445">
    <property type="entry name" value="NDH1_NuoN_1"/>
    <property type="match status" value="1"/>
</dbReference>
<dbReference type="InterPro" id="IPR010096">
    <property type="entry name" value="NADH-Q_OxRdtase_suN/2"/>
</dbReference>
<dbReference type="InterPro" id="IPR001750">
    <property type="entry name" value="ND/Mrp_TM"/>
</dbReference>
<dbReference type="NCBIfam" id="TIGR01770">
    <property type="entry name" value="NDH_I_N"/>
    <property type="match status" value="1"/>
</dbReference>
<dbReference type="PANTHER" id="PTHR22773">
    <property type="entry name" value="NADH DEHYDROGENASE"/>
    <property type="match status" value="1"/>
</dbReference>
<dbReference type="Pfam" id="PF00361">
    <property type="entry name" value="Proton_antipo_M"/>
    <property type="match status" value="1"/>
</dbReference>